<reference key="1">
    <citation type="journal article" date="2008" name="Appl. Environ. Microbiol.">
        <title>Genome of the epsilonproteobacterial chemolithoautotroph Sulfurimonas denitrificans.</title>
        <authorList>
            <person name="Sievert S.M."/>
            <person name="Scott K.M."/>
            <person name="Klotz M.G."/>
            <person name="Chain P.S.G."/>
            <person name="Hauser L.J."/>
            <person name="Hemp J."/>
            <person name="Huegler M."/>
            <person name="Land M."/>
            <person name="Lapidus A."/>
            <person name="Larimer F.W."/>
            <person name="Lucas S."/>
            <person name="Malfatti S.A."/>
            <person name="Meyer F."/>
            <person name="Paulsen I.T."/>
            <person name="Ren Q."/>
            <person name="Simon J."/>
            <person name="Bailey K."/>
            <person name="Diaz E."/>
            <person name="Fitzpatrick K.A."/>
            <person name="Glover B."/>
            <person name="Gwatney N."/>
            <person name="Korajkic A."/>
            <person name="Long A."/>
            <person name="Mobberley J.M."/>
            <person name="Pantry S.N."/>
            <person name="Pazder G."/>
            <person name="Peterson S."/>
            <person name="Quintanilla J.D."/>
            <person name="Sprinkle R."/>
            <person name="Stephens J."/>
            <person name="Thomas P."/>
            <person name="Vaughn R."/>
            <person name="Weber M.J."/>
            <person name="Wooten L.L."/>
        </authorList>
    </citation>
    <scope>NUCLEOTIDE SEQUENCE [LARGE SCALE GENOMIC DNA]</scope>
    <source>
        <strain>ATCC 33889 / DSM 1251</strain>
    </source>
</reference>
<proteinExistence type="inferred from homology"/>
<name>SELD_SULDN</name>
<gene>
    <name evidence="1" type="primary">selD</name>
    <name type="ordered locus">Suden_1162</name>
</gene>
<comment type="function">
    <text evidence="1">Synthesizes selenophosphate from selenide and ATP.</text>
</comment>
<comment type="catalytic activity">
    <reaction evidence="1">
        <text>hydrogenselenide + ATP + H2O = selenophosphate + AMP + phosphate + 2 H(+)</text>
        <dbReference type="Rhea" id="RHEA:18737"/>
        <dbReference type="ChEBI" id="CHEBI:15377"/>
        <dbReference type="ChEBI" id="CHEBI:15378"/>
        <dbReference type="ChEBI" id="CHEBI:16144"/>
        <dbReference type="ChEBI" id="CHEBI:29317"/>
        <dbReference type="ChEBI" id="CHEBI:30616"/>
        <dbReference type="ChEBI" id="CHEBI:43474"/>
        <dbReference type="ChEBI" id="CHEBI:456215"/>
        <dbReference type="EC" id="2.7.9.3"/>
    </reaction>
</comment>
<comment type="cofactor">
    <cofactor evidence="1">
        <name>Mg(2+)</name>
        <dbReference type="ChEBI" id="CHEBI:18420"/>
    </cofactor>
    <text evidence="1">Binds 1 Mg(2+) ion per monomer.</text>
</comment>
<comment type="subunit">
    <text evidence="1">Homodimer.</text>
</comment>
<comment type="similarity">
    <text evidence="1">Belongs to the selenophosphate synthase 1 family. Class I subfamily.</text>
</comment>
<sequence>MEEIKLTEYSHGAGCGCKISPMLLDEILKTDISSTLYPQLLVGNEHKDDAAAYDLGNGTSVLSTTDFFMPIVDDAFTFGRIAATNALSDIYAMGGKPLMAISIFGWPIEKLSSEVARQVIDGGRAACEDAGIPLAGGHSIDSPEPIFGLAVTGIVDNKNLMKNSSATDDCYIFITKSIGIGILTTAQKQKKIEDGDIDVAIEAMATLNRAGAIFATLDSVLTMTDVTGFGLLGHLSEVCEASGISANIWFEKVPLLQNVEKYRAQGCIPGGSRKNFMSYGHKISQISDRQREILCDAQTSGGLLVFVKKSGLDEFYKSAKEFGLNLEPIGETTPRRKHVIEVL</sequence>
<evidence type="ECO:0000255" key="1">
    <source>
        <dbReference type="HAMAP-Rule" id="MF_00625"/>
    </source>
</evidence>
<dbReference type="EC" id="2.7.9.3" evidence="1"/>
<dbReference type="EMBL" id="CP000153">
    <property type="protein sequence ID" value="ABB44440.1"/>
    <property type="molecule type" value="Genomic_DNA"/>
</dbReference>
<dbReference type="SMR" id="Q30RE1"/>
<dbReference type="STRING" id="326298.Suden_1162"/>
<dbReference type="KEGG" id="tdn:Suden_1162"/>
<dbReference type="eggNOG" id="COG0709">
    <property type="taxonomic scope" value="Bacteria"/>
</dbReference>
<dbReference type="HOGENOM" id="CLU_032859_0_1_7"/>
<dbReference type="Proteomes" id="UP000002714">
    <property type="component" value="Chromosome"/>
</dbReference>
<dbReference type="GO" id="GO:0005737">
    <property type="term" value="C:cytoplasm"/>
    <property type="evidence" value="ECO:0007669"/>
    <property type="project" value="TreeGrafter"/>
</dbReference>
<dbReference type="GO" id="GO:0005524">
    <property type="term" value="F:ATP binding"/>
    <property type="evidence" value="ECO:0007669"/>
    <property type="project" value="UniProtKB-UniRule"/>
</dbReference>
<dbReference type="GO" id="GO:0000287">
    <property type="term" value="F:magnesium ion binding"/>
    <property type="evidence" value="ECO:0007669"/>
    <property type="project" value="UniProtKB-UniRule"/>
</dbReference>
<dbReference type="GO" id="GO:0004756">
    <property type="term" value="F:selenide, water dikinase activity"/>
    <property type="evidence" value="ECO:0007669"/>
    <property type="project" value="UniProtKB-UniRule"/>
</dbReference>
<dbReference type="GO" id="GO:0016260">
    <property type="term" value="P:selenocysteine biosynthetic process"/>
    <property type="evidence" value="ECO:0007669"/>
    <property type="project" value="InterPro"/>
</dbReference>
<dbReference type="CDD" id="cd02195">
    <property type="entry name" value="SelD"/>
    <property type="match status" value="1"/>
</dbReference>
<dbReference type="FunFam" id="3.30.1330.10:FF:000003">
    <property type="entry name" value="Selenide, water dikinase"/>
    <property type="match status" value="1"/>
</dbReference>
<dbReference type="FunFam" id="3.90.650.10:FF:000004">
    <property type="entry name" value="Selenide, water dikinase"/>
    <property type="match status" value="1"/>
</dbReference>
<dbReference type="Gene3D" id="3.90.650.10">
    <property type="entry name" value="PurM-like C-terminal domain"/>
    <property type="match status" value="1"/>
</dbReference>
<dbReference type="Gene3D" id="3.30.1330.10">
    <property type="entry name" value="PurM-like, N-terminal domain"/>
    <property type="match status" value="1"/>
</dbReference>
<dbReference type="HAMAP" id="MF_00625">
    <property type="entry name" value="SelD"/>
    <property type="match status" value="1"/>
</dbReference>
<dbReference type="InterPro" id="IPR010918">
    <property type="entry name" value="PurM-like_C_dom"/>
</dbReference>
<dbReference type="InterPro" id="IPR036676">
    <property type="entry name" value="PurM-like_C_sf"/>
</dbReference>
<dbReference type="InterPro" id="IPR016188">
    <property type="entry name" value="PurM-like_N"/>
</dbReference>
<dbReference type="InterPro" id="IPR036921">
    <property type="entry name" value="PurM-like_N_sf"/>
</dbReference>
<dbReference type="InterPro" id="IPR023061">
    <property type="entry name" value="SelD_I"/>
</dbReference>
<dbReference type="InterPro" id="IPR004536">
    <property type="entry name" value="SPS/SelD"/>
</dbReference>
<dbReference type="NCBIfam" id="NF002098">
    <property type="entry name" value="PRK00943.1"/>
    <property type="match status" value="1"/>
</dbReference>
<dbReference type="NCBIfam" id="TIGR00476">
    <property type="entry name" value="selD"/>
    <property type="match status" value="1"/>
</dbReference>
<dbReference type="PANTHER" id="PTHR10256:SF0">
    <property type="entry name" value="INACTIVE SELENIDE, WATER DIKINASE-LIKE PROTEIN-RELATED"/>
    <property type="match status" value="1"/>
</dbReference>
<dbReference type="PANTHER" id="PTHR10256">
    <property type="entry name" value="SELENIDE, WATER DIKINASE"/>
    <property type="match status" value="1"/>
</dbReference>
<dbReference type="Pfam" id="PF00586">
    <property type="entry name" value="AIRS"/>
    <property type="match status" value="1"/>
</dbReference>
<dbReference type="Pfam" id="PF02769">
    <property type="entry name" value="AIRS_C"/>
    <property type="match status" value="1"/>
</dbReference>
<dbReference type="PIRSF" id="PIRSF036407">
    <property type="entry name" value="Selenphspht_syn"/>
    <property type="match status" value="1"/>
</dbReference>
<dbReference type="SUPFAM" id="SSF56042">
    <property type="entry name" value="PurM C-terminal domain-like"/>
    <property type="match status" value="1"/>
</dbReference>
<dbReference type="SUPFAM" id="SSF55326">
    <property type="entry name" value="PurM N-terminal domain-like"/>
    <property type="match status" value="1"/>
</dbReference>
<accession>Q30RE1</accession>
<protein>
    <recommendedName>
        <fullName evidence="1">Selenide, water dikinase</fullName>
        <ecNumber evidence="1">2.7.9.3</ecNumber>
    </recommendedName>
    <alternativeName>
        <fullName evidence="1">Selenium donor protein</fullName>
    </alternativeName>
    <alternativeName>
        <fullName evidence="1">Selenophosphate synthase</fullName>
    </alternativeName>
</protein>
<organism>
    <name type="scientific">Sulfurimonas denitrificans (strain ATCC 33889 / DSM 1251)</name>
    <name type="common">Thiomicrospira denitrificans (strain ATCC 33889 / DSM 1251)</name>
    <dbReference type="NCBI Taxonomy" id="326298"/>
    <lineage>
        <taxon>Bacteria</taxon>
        <taxon>Pseudomonadati</taxon>
        <taxon>Campylobacterota</taxon>
        <taxon>Epsilonproteobacteria</taxon>
        <taxon>Campylobacterales</taxon>
        <taxon>Sulfurimonadaceae</taxon>
        <taxon>Sulfurimonas</taxon>
    </lineage>
</organism>
<keyword id="KW-0067">ATP-binding</keyword>
<keyword id="KW-0418">Kinase</keyword>
<keyword id="KW-0460">Magnesium</keyword>
<keyword id="KW-0479">Metal-binding</keyword>
<keyword id="KW-0547">Nucleotide-binding</keyword>
<keyword id="KW-1185">Reference proteome</keyword>
<keyword id="KW-0711">Selenium</keyword>
<keyword id="KW-0808">Transferase</keyword>
<feature type="chain" id="PRO_1000130522" description="Selenide, water dikinase">
    <location>
        <begin position="1"/>
        <end position="343"/>
    </location>
</feature>
<feature type="active site" evidence="1">
    <location>
        <position position="15"/>
    </location>
</feature>
<feature type="binding site" description="in other chain" evidence="1">
    <location>
        <position position="18"/>
    </location>
    <ligand>
        <name>ATP</name>
        <dbReference type="ChEBI" id="CHEBI:30616"/>
        <note>ligand shared between dimeric partners</note>
    </ligand>
</feature>
<feature type="binding site" description="in other chain" evidence="1">
    <location>
        <begin position="46"/>
        <end position="48"/>
    </location>
    <ligand>
        <name>ATP</name>
        <dbReference type="ChEBI" id="CHEBI:30616"/>
        <note>ligand shared between dimeric partners</note>
    </ligand>
</feature>
<feature type="binding site" evidence="1">
    <location>
        <position position="49"/>
    </location>
    <ligand>
        <name>Mg(2+)</name>
        <dbReference type="ChEBI" id="CHEBI:18420"/>
    </ligand>
</feature>
<feature type="binding site" description="in other chain" evidence="1">
    <location>
        <position position="66"/>
    </location>
    <ligand>
        <name>ATP</name>
        <dbReference type="ChEBI" id="CHEBI:30616"/>
        <note>ligand shared between dimeric partners</note>
    </ligand>
</feature>
<feature type="binding site" description="in other chain" evidence="1">
    <location>
        <position position="89"/>
    </location>
    <ligand>
        <name>ATP</name>
        <dbReference type="ChEBI" id="CHEBI:30616"/>
        <note>ligand shared between dimeric partners</note>
    </ligand>
</feature>
<feature type="binding site" evidence="1">
    <location>
        <position position="89"/>
    </location>
    <ligand>
        <name>Mg(2+)</name>
        <dbReference type="ChEBI" id="CHEBI:18420"/>
    </ligand>
</feature>
<feature type="binding site" evidence="1">
    <location>
        <begin position="137"/>
        <end position="139"/>
    </location>
    <ligand>
        <name>ATP</name>
        <dbReference type="ChEBI" id="CHEBI:30616"/>
        <note>ligand shared between dimeric partners</note>
    </ligand>
</feature>
<feature type="binding site" evidence="1">
    <location>
        <position position="225"/>
    </location>
    <ligand>
        <name>Mg(2+)</name>
        <dbReference type="ChEBI" id="CHEBI:18420"/>
    </ligand>
</feature>
<feature type="site" description="Important for catalytic activity" evidence="1">
    <location>
        <position position="18"/>
    </location>
</feature>